<organism>
    <name type="scientific">Acanthamoeba polyphaga mimivirus</name>
    <name type="common">APMV</name>
    <dbReference type="NCBI Taxonomy" id="212035"/>
    <lineage>
        <taxon>Viruses</taxon>
        <taxon>Varidnaviria</taxon>
        <taxon>Bamfordvirae</taxon>
        <taxon>Nucleocytoviricota</taxon>
        <taxon>Megaviricetes</taxon>
        <taxon>Imitervirales</taxon>
        <taxon>Mimiviridae</taxon>
        <taxon>Megamimivirinae</taxon>
        <taxon>Mimivirus</taxon>
        <taxon>Mimivirus bradfordmassiliense</taxon>
    </lineage>
</organism>
<gene>
    <name type="ordered locus">MIMI_L812</name>
</gene>
<comment type="similarity">
    <text evidence="1">Belongs to the mimivirus L223/L227/L812 family.</text>
</comment>
<name>YL812_MIMIV</name>
<evidence type="ECO:0000305" key="1"/>
<proteinExistence type="inferred from homology"/>
<reference key="1">
    <citation type="journal article" date="2004" name="Science">
        <title>The 1.2-megabase genome sequence of Mimivirus.</title>
        <authorList>
            <person name="Raoult D."/>
            <person name="Audic S."/>
            <person name="Robert C."/>
            <person name="Abergel C."/>
            <person name="Renesto P."/>
            <person name="Ogata H."/>
            <person name="La Scola B."/>
            <person name="Susan M."/>
            <person name="Claverie J.-M."/>
        </authorList>
    </citation>
    <scope>NUCLEOTIDE SEQUENCE [LARGE SCALE GENOMIC DNA]</scope>
    <source>
        <strain>Rowbotham-Bradford</strain>
    </source>
</reference>
<dbReference type="EMBL" id="AY653733">
    <property type="protein sequence ID" value="AAV51072.1"/>
    <property type="molecule type" value="Genomic_DNA"/>
</dbReference>
<dbReference type="KEGG" id="vg:9925475"/>
<dbReference type="Proteomes" id="UP000001134">
    <property type="component" value="Genome"/>
</dbReference>
<organismHost>
    <name type="scientific">Acanthamoeba polyphaga</name>
    <name type="common">Amoeba</name>
    <dbReference type="NCBI Taxonomy" id="5757"/>
</organismHost>
<accession>Q5UQ34</accession>
<sequence>MANYIPNDWRDNDITNRYIRYRRTGPHKTTGPTTVYKKLECTKKIERWGIPLTKYRVGIATLEIPPESKLVRLLYGTFGDIRFDQAFVKKIEYINDKDKYISDDYVCTSEIYNLENYPLNFKVGQMVNFIDNDQLNENQHDLEGPGISAYFSKKESKN</sequence>
<feature type="chain" id="PRO_0000071362" description="Uncharacterized protein L812">
    <location>
        <begin position="1"/>
        <end position="158"/>
    </location>
</feature>
<keyword id="KW-1185">Reference proteome</keyword>
<protein>
    <recommendedName>
        <fullName>Uncharacterized protein L812</fullName>
    </recommendedName>
</protein>